<keyword id="KW-1185">Reference proteome</keyword>
<sequence>MLFLLSPAKSLDYATPAHVAAHTQPLFKRQSAELIAVLKAKSPQEISSLMKLSDALAGLNVARYEAWSPAFTAHNSKQAVLAFNGDVYAGLDAKTLGEAQLAWAQDHLCILSGLYGVLRPLDWMQPYRLEMGTALVTGRGKNLYQFWGAQIADYLNERAATDVSPVIVNLASEEYFKSVSRKVLKARVVTCVFEEWRGDKYKIISFMAKRARGLMVRYAIENRLATVEKLKGFEAEGYCFDASASAVDRLVFRRGQGA</sequence>
<gene>
    <name type="ordered locus">Pnap_3166</name>
</gene>
<proteinExistence type="inferred from homology"/>
<name>Y3166_POLNA</name>
<organism>
    <name type="scientific">Polaromonas naphthalenivorans (strain CJ2)</name>
    <dbReference type="NCBI Taxonomy" id="365044"/>
    <lineage>
        <taxon>Bacteria</taxon>
        <taxon>Pseudomonadati</taxon>
        <taxon>Pseudomonadota</taxon>
        <taxon>Betaproteobacteria</taxon>
        <taxon>Burkholderiales</taxon>
        <taxon>Comamonadaceae</taxon>
        <taxon>Polaromonas</taxon>
    </lineage>
</organism>
<comment type="similarity">
    <text evidence="1">Belongs to the UPF0246 family.</text>
</comment>
<reference key="1">
    <citation type="journal article" date="2009" name="Environ. Microbiol.">
        <title>The genome of Polaromonas naphthalenivorans strain CJ2, isolated from coal tar-contaminated sediment, reveals physiological and metabolic versatility and evolution through extensive horizontal gene transfer.</title>
        <authorList>
            <person name="Yagi J.M."/>
            <person name="Sims D."/>
            <person name="Brettin T."/>
            <person name="Bruce D."/>
            <person name="Madsen E.L."/>
        </authorList>
    </citation>
    <scope>NUCLEOTIDE SEQUENCE [LARGE SCALE GENOMIC DNA]</scope>
    <source>
        <strain>CJ2</strain>
    </source>
</reference>
<dbReference type="EMBL" id="CP000529">
    <property type="protein sequence ID" value="ABM38464.1"/>
    <property type="molecule type" value="Genomic_DNA"/>
</dbReference>
<dbReference type="RefSeq" id="WP_011802535.1">
    <property type="nucleotide sequence ID" value="NC_008781.1"/>
</dbReference>
<dbReference type="SMR" id="A1VS36"/>
<dbReference type="STRING" id="365044.Pnap_3166"/>
<dbReference type="KEGG" id="pna:Pnap_3166"/>
<dbReference type="eggNOG" id="COG3022">
    <property type="taxonomic scope" value="Bacteria"/>
</dbReference>
<dbReference type="HOGENOM" id="CLU_061989_0_0_4"/>
<dbReference type="OrthoDB" id="9777133at2"/>
<dbReference type="Proteomes" id="UP000000644">
    <property type="component" value="Chromosome"/>
</dbReference>
<dbReference type="GO" id="GO:0005829">
    <property type="term" value="C:cytosol"/>
    <property type="evidence" value="ECO:0007669"/>
    <property type="project" value="TreeGrafter"/>
</dbReference>
<dbReference type="GO" id="GO:0033194">
    <property type="term" value="P:response to hydroperoxide"/>
    <property type="evidence" value="ECO:0007669"/>
    <property type="project" value="TreeGrafter"/>
</dbReference>
<dbReference type="HAMAP" id="MF_00652">
    <property type="entry name" value="UPF0246"/>
    <property type="match status" value="1"/>
</dbReference>
<dbReference type="InterPro" id="IPR005583">
    <property type="entry name" value="YaaA"/>
</dbReference>
<dbReference type="NCBIfam" id="NF002542">
    <property type="entry name" value="PRK02101.1-3"/>
    <property type="match status" value="1"/>
</dbReference>
<dbReference type="PANTHER" id="PTHR30283:SF4">
    <property type="entry name" value="PEROXIDE STRESS RESISTANCE PROTEIN YAAA"/>
    <property type="match status" value="1"/>
</dbReference>
<dbReference type="PANTHER" id="PTHR30283">
    <property type="entry name" value="PEROXIDE STRESS RESPONSE PROTEIN YAAA"/>
    <property type="match status" value="1"/>
</dbReference>
<dbReference type="Pfam" id="PF03883">
    <property type="entry name" value="H2O2_YaaD"/>
    <property type="match status" value="1"/>
</dbReference>
<protein>
    <recommendedName>
        <fullName evidence="1">UPF0246 protein Pnap_3166</fullName>
    </recommendedName>
</protein>
<accession>A1VS36</accession>
<evidence type="ECO:0000255" key="1">
    <source>
        <dbReference type="HAMAP-Rule" id="MF_00652"/>
    </source>
</evidence>
<feature type="chain" id="PRO_1000061620" description="UPF0246 protein Pnap_3166">
    <location>
        <begin position="1"/>
        <end position="258"/>
    </location>
</feature>